<name>GS_CATRO</name>
<keyword id="KW-0002">3D-structure</keyword>
<keyword id="KW-0017">Alkaloid metabolism</keyword>
<keyword id="KW-0479">Metal-binding</keyword>
<keyword id="KW-0521">NADP</keyword>
<keyword id="KW-0560">Oxidoreductase</keyword>
<keyword id="KW-0862">Zinc</keyword>
<sequence>MAGETTKLDLSVKAVGWGAADASGVLQPIKFYRRVPGERDVKIRVLYSGVCNFDMEMVRNKWGFTRYPYVFGHETAGEVVEVGSKVEKFKVGDKVAVGCMVGSCGQCYNCQSGMENYCPEPNMADGSVYREQGERSYGGCSNVMVVDEKFVLRWPENLPQDKGVALLCAGVVVYSPMKHLGLDKPGKHIGVFGLGGLGSVAVKFIKAFGGKATVISTSRRKEKEAIEEHGADAFVVNTDSEQLKALAGTMDGVVDTTPGGRTPMSLMLNLLKFDGAVMLVGAPESLFELPAAPLIMGRKKIIGSSTGGLKEYQEMLDFAAKHNIVCDTEVIGIDYLSTAMERIKNLDVKYRFAIDIGNTLKFEE</sequence>
<feature type="chain" id="PRO_0000446403" description="Geissoschizine synthase">
    <location>
        <begin position="1"/>
        <end position="364"/>
    </location>
</feature>
<feature type="binding site" evidence="6 12">
    <location>
        <position position="51"/>
    </location>
    <ligand>
        <name>Zn(2+)</name>
        <dbReference type="ChEBI" id="CHEBI:29105"/>
        <label>1</label>
        <note>catalytic</note>
    </ligand>
</feature>
<feature type="binding site" evidence="6 12">
    <location>
        <position position="52"/>
    </location>
    <ligand>
        <name>NADP(+)</name>
        <dbReference type="ChEBI" id="CHEBI:58349"/>
    </ligand>
</feature>
<feature type="binding site" evidence="6 12">
    <location>
        <position position="73"/>
    </location>
    <ligand>
        <name>Zn(2+)</name>
        <dbReference type="ChEBI" id="CHEBI:29105"/>
        <label>1</label>
        <note>catalytic</note>
    </ligand>
</feature>
<feature type="binding site" evidence="6 12">
    <location>
        <position position="74"/>
    </location>
    <ligand>
        <name>Zn(2+)</name>
        <dbReference type="ChEBI" id="CHEBI:29105"/>
        <label>1</label>
        <note>catalytic</note>
    </ligand>
</feature>
<feature type="binding site" evidence="6 12">
    <location>
        <position position="104"/>
    </location>
    <ligand>
        <name>Zn(2+)</name>
        <dbReference type="ChEBI" id="CHEBI:29105"/>
        <label>2</label>
    </ligand>
</feature>
<feature type="binding site" evidence="6 12">
    <location>
        <position position="107"/>
    </location>
    <ligand>
        <name>Zn(2+)</name>
        <dbReference type="ChEBI" id="CHEBI:29105"/>
        <label>2</label>
    </ligand>
</feature>
<feature type="binding site" evidence="6 12">
    <location>
        <position position="110"/>
    </location>
    <ligand>
        <name>Zn(2+)</name>
        <dbReference type="ChEBI" id="CHEBI:29105"/>
        <label>2</label>
    </ligand>
</feature>
<feature type="binding site" evidence="6 12">
    <location>
        <position position="118"/>
    </location>
    <ligand>
        <name>Zn(2+)</name>
        <dbReference type="ChEBI" id="CHEBI:29105"/>
        <label>2</label>
    </ligand>
</feature>
<feature type="binding site" evidence="6 12">
    <location>
        <position position="168"/>
    </location>
    <ligand>
        <name>Zn(2+)</name>
        <dbReference type="ChEBI" id="CHEBI:29105"/>
        <label>1</label>
        <note>catalytic</note>
    </ligand>
</feature>
<feature type="binding site" evidence="6 12">
    <location>
        <position position="194"/>
    </location>
    <ligand>
        <name>NADP(+)</name>
        <dbReference type="ChEBI" id="CHEBI:58349"/>
    </ligand>
</feature>
<feature type="binding site" evidence="6 12">
    <location>
        <position position="196"/>
    </location>
    <ligand>
        <name>NADP(+)</name>
        <dbReference type="ChEBI" id="CHEBI:58349"/>
    </ligand>
</feature>
<feature type="binding site" evidence="6 12">
    <location>
        <position position="197"/>
    </location>
    <ligand>
        <name>NADP(+)</name>
        <dbReference type="ChEBI" id="CHEBI:58349"/>
    </ligand>
</feature>
<feature type="binding site" evidence="6 12">
    <location>
        <position position="216"/>
    </location>
    <ligand>
        <name>NADP(+)</name>
        <dbReference type="ChEBI" id="CHEBI:58349"/>
    </ligand>
</feature>
<feature type="binding site" evidence="6 12">
    <location>
        <position position="217"/>
    </location>
    <ligand>
        <name>NADP(+)</name>
        <dbReference type="ChEBI" id="CHEBI:58349"/>
    </ligand>
</feature>
<feature type="binding site" evidence="6 12">
    <location>
        <position position="218"/>
    </location>
    <ligand>
        <name>NADP(+)</name>
        <dbReference type="ChEBI" id="CHEBI:58349"/>
    </ligand>
</feature>
<feature type="binding site" evidence="6 12">
    <location>
        <position position="221"/>
    </location>
    <ligand>
        <name>NADP(+)</name>
        <dbReference type="ChEBI" id="CHEBI:58349"/>
    </ligand>
</feature>
<feature type="binding site" evidence="6 12">
    <location>
        <position position="261"/>
    </location>
    <ligand>
        <name>NADP(+)</name>
        <dbReference type="ChEBI" id="CHEBI:58349"/>
    </ligand>
</feature>
<feature type="binding site" evidence="6 12">
    <location>
        <position position="280"/>
    </location>
    <ligand>
        <name>NADP(+)</name>
        <dbReference type="ChEBI" id="CHEBI:58349"/>
    </ligand>
</feature>
<feature type="binding site" evidence="6 12">
    <location>
        <position position="282"/>
    </location>
    <ligand>
        <name>NADP(+)</name>
        <dbReference type="ChEBI" id="CHEBI:58349"/>
    </ligand>
</feature>
<feature type="binding site" evidence="6 12">
    <location>
        <position position="304"/>
    </location>
    <ligand>
        <name>NADP(+)</name>
        <dbReference type="ChEBI" id="CHEBI:58349"/>
    </ligand>
</feature>
<feature type="binding site" evidence="6 12">
    <location>
        <position position="306"/>
    </location>
    <ligand>
        <name>NADP(+)</name>
        <dbReference type="ChEBI" id="CHEBI:58349"/>
    </ligand>
</feature>
<feature type="binding site" evidence="6 12">
    <location>
        <position position="351"/>
    </location>
    <ligand>
        <name>NADP(+)</name>
        <dbReference type="ChEBI" id="CHEBI:58349"/>
    </ligand>
</feature>
<feature type="mutagenesis site" description="Abolished activity." evidence="6">
    <original>F</original>
    <variation>T</variation>
    <location>
        <position position="53"/>
    </location>
</feature>
<feature type="mutagenesis site" description="Abolished activity." evidence="6">
    <original>H</original>
    <variation>M</variation>
    <location>
        <position position="73"/>
    </location>
</feature>
<feature type="mutagenesis site" description="Abolished activity." evidence="6">
    <original>C</original>
    <variation>S</variation>
    <location>
        <position position="168"/>
    </location>
</feature>
<feature type="strand" evidence="13">
    <location>
        <begin position="10"/>
        <end position="21"/>
    </location>
</feature>
<feature type="strand" evidence="13">
    <location>
        <begin position="26"/>
        <end position="34"/>
    </location>
</feature>
<feature type="strand" evidence="13">
    <location>
        <begin position="40"/>
        <end position="50"/>
    </location>
</feature>
<feature type="helix" evidence="13">
    <location>
        <begin position="52"/>
        <end position="58"/>
    </location>
</feature>
<feature type="strand" evidence="13">
    <location>
        <begin position="61"/>
        <end position="63"/>
    </location>
</feature>
<feature type="strand" evidence="13">
    <location>
        <begin position="67"/>
        <end position="70"/>
    </location>
</feature>
<feature type="strand" evidence="13">
    <location>
        <begin position="75"/>
        <end position="82"/>
    </location>
</feature>
<feature type="strand" evidence="13">
    <location>
        <begin position="94"/>
        <end position="97"/>
    </location>
</feature>
<feature type="strand" evidence="13">
    <location>
        <begin position="99"/>
        <end position="102"/>
    </location>
</feature>
<feature type="strand" evidence="13">
    <location>
        <begin position="105"/>
        <end position="107"/>
    </location>
</feature>
<feature type="helix" evidence="13">
    <location>
        <begin position="108"/>
        <end position="111"/>
    </location>
</feature>
<feature type="helix" evidence="13">
    <location>
        <begin position="115"/>
        <end position="117"/>
    </location>
</feature>
<feature type="strand" evidence="13">
    <location>
        <begin position="139"/>
        <end position="147"/>
    </location>
</feature>
<feature type="helix" evidence="13">
    <location>
        <begin position="148"/>
        <end position="150"/>
    </location>
</feature>
<feature type="strand" evidence="13">
    <location>
        <begin position="151"/>
        <end position="153"/>
    </location>
</feature>
<feature type="helix" evidence="13">
    <location>
        <begin position="160"/>
        <end position="163"/>
    </location>
</feature>
<feature type="helix" evidence="13">
    <location>
        <begin position="164"/>
        <end position="167"/>
    </location>
</feature>
<feature type="helix" evidence="13">
    <location>
        <begin position="169"/>
        <end position="179"/>
    </location>
</feature>
<feature type="strand" evidence="13">
    <location>
        <begin position="188"/>
        <end position="192"/>
    </location>
</feature>
<feature type="helix" evidence="13">
    <location>
        <begin position="196"/>
        <end position="207"/>
    </location>
</feature>
<feature type="strand" evidence="13">
    <location>
        <begin position="211"/>
        <end position="217"/>
    </location>
</feature>
<feature type="helix" evidence="13">
    <location>
        <begin position="219"/>
        <end position="221"/>
    </location>
</feature>
<feature type="helix" evidence="13">
    <location>
        <begin position="222"/>
        <end position="227"/>
    </location>
</feature>
<feature type="strand" evidence="13">
    <location>
        <begin position="232"/>
        <end position="236"/>
    </location>
</feature>
<feature type="helix" evidence="13">
    <location>
        <begin position="240"/>
        <end position="245"/>
    </location>
</feature>
<feature type="turn" evidence="13">
    <location>
        <begin position="246"/>
        <end position="248"/>
    </location>
</feature>
<feature type="strand" evidence="13">
    <location>
        <begin position="250"/>
        <end position="255"/>
    </location>
</feature>
<feature type="helix" evidence="13">
    <location>
        <begin position="264"/>
        <end position="270"/>
    </location>
</feature>
<feature type="strand" evidence="13">
    <location>
        <begin position="271"/>
        <end position="279"/>
    </location>
</feature>
<feature type="strand" evidence="13">
    <location>
        <begin position="287"/>
        <end position="289"/>
    </location>
</feature>
<feature type="helix" evidence="13">
    <location>
        <begin position="291"/>
        <end position="297"/>
    </location>
</feature>
<feature type="strand" evidence="13">
    <location>
        <begin position="300"/>
        <end position="303"/>
    </location>
</feature>
<feature type="helix" evidence="13">
    <location>
        <begin position="309"/>
        <end position="321"/>
    </location>
</feature>
<feature type="strand" evidence="13">
    <location>
        <begin position="328"/>
        <end position="331"/>
    </location>
</feature>
<feature type="helix" evidence="13">
    <location>
        <begin position="333"/>
        <end position="335"/>
    </location>
</feature>
<feature type="helix" evidence="13">
    <location>
        <begin position="336"/>
        <end position="344"/>
    </location>
</feature>
<feature type="strand" evidence="13">
    <location>
        <begin position="348"/>
        <end position="355"/>
    </location>
</feature>
<feature type="helix" evidence="13">
    <location>
        <begin position="356"/>
        <end position="359"/>
    </location>
</feature>
<accession>W8JWW7</accession>
<proteinExistence type="evidence at protein level"/>
<reference key="1">
    <citation type="journal article" date="2014" name="Nat. Commun.">
        <title>The seco-iridoid pathway from Catharanthus roseus.</title>
        <authorList>
            <person name="Miettinen K."/>
            <person name="Dong L."/>
            <person name="Navrot N."/>
            <person name="Schneider T."/>
            <person name="Burlat V."/>
            <person name="Pollier J."/>
            <person name="Woittiez L."/>
            <person name="van der Krol S."/>
            <person name="Lugan R."/>
            <person name="Ilc T."/>
            <person name="Verpoorte R."/>
            <person name="Oksman-Caldentey K.M."/>
            <person name="Martinoia E."/>
            <person name="Bouwmeester H."/>
            <person name="Goossens A."/>
            <person name="Memelink J."/>
            <person name="Werck-Reichhart D."/>
        </authorList>
    </citation>
    <scope>NUCLEOTIDE SEQUENCE [MRNA]</scope>
    <scope>TISSUE SPECIFICITY</scope>
    <source>
        <strain>cv. Little Bright Eyes</strain>
    </source>
</reference>
<reference key="2">
    <citation type="journal article" date="2018" name="Proc. Natl. Acad. Sci. U.S.A.">
        <title>Solution of the multistep pathway for assembly of corynanthean, strychnos, iboga, and aspidosperma monoterpenoid indole alkaloids from 19E-geissoschizine.</title>
        <authorList>
            <person name="Qu Y."/>
            <person name="Easson M.E.A.M."/>
            <person name="Simionescu R."/>
            <person name="Hajicek J."/>
            <person name="Thamm A.M.K."/>
            <person name="Salim V."/>
            <person name="De Luca V."/>
        </authorList>
    </citation>
    <scope>NUCLEOTIDE SEQUENCE [MRNA]</scope>
</reference>
<reference key="3">
    <citation type="journal article" date="2019" name="Plant J.">
        <title>Completion of the canonical pathway for assembly of anticancer drugs vincristine/vinblastine in Catharanthus roseus.</title>
        <authorList>
            <person name="Qu Y."/>
            <person name="Safonova O."/>
            <person name="De Luca V."/>
        </authorList>
    </citation>
    <scope>FUNCTION</scope>
    <scope>DISRUPTION PHENOTYPE</scope>
    <scope>CATALYTIC ACTIVITY</scope>
    <scope>TISSUE SPECIFICITY</scope>
    <scope>PATHWAY</scope>
    <source>
        <strain>cv. Little Delicata</strain>
    </source>
</reference>
<reference key="4">
    <citation type="journal article" date="2018" name="Plant Physiol. Biochem.">
        <title>Changes in medicinal alkaloids production and expression of related regulatory and biosynthetic genes in response to silver nitrate combined with methyl jasmonate in Catharanthus roseus in vitro propagated shoots.</title>
        <authorList>
            <person name="Paeizi M."/>
            <person name="Karimi F."/>
            <person name="Razavi K."/>
        </authorList>
    </citation>
    <scope>INDUCTION BY SILVER NITRATE AND METHYL JASMONATE</scope>
</reference>
<reference key="5">
    <citation type="journal article" date="2018" name="Planta">
        <title>Geissoschizine synthase controls flux in the formation of monoterpenoid indole alkaloids in a Catharanthus roseus mutant.</title>
        <authorList>
            <person name="Qu Y."/>
            <person name="Thamm A.M.K."/>
            <person name="Czerwinski M."/>
            <person name="Masada S."/>
            <person name="Kim K.H."/>
            <person name="Jones G."/>
            <person name="Liang P."/>
            <person name="De Luca V."/>
        </authorList>
    </citation>
    <scope>FUNCTION</scope>
    <scope>DISRUPTION PHENOTYPE</scope>
    <scope>PATHWAY</scope>
    <scope>CATALYTIC ACTIVITY</scope>
</reference>
<reference evidence="12" key="6">
    <citation type="journal article" date="2022" name="Angew. Chem. Int. Ed.">
        <title>Expansion of the catalytic repertoire of alcohol dehydrogenases in plant metabolism.</title>
        <authorList>
            <person name="Langley C."/>
            <person name="Tatsis E."/>
            <person name="Hong B."/>
            <person name="Nakamura Y."/>
            <person name="Paetz C."/>
            <person name="Stevenson C.E.M."/>
            <person name="Basquin J."/>
            <person name="Lawson D.M."/>
            <person name="Caputi L."/>
            <person name="O'Connor S.E."/>
        </authorList>
    </citation>
    <scope>X-RAY CRYSTALLOGRAPHY (2.00 ANGSTROMS) OF 2-364 IN COMPLEX WITH NADP(+) AND ZN(2+)</scope>
    <scope>FUNCTION</scope>
    <scope>MUTAGENESIS OF PHE-53; HIS-73 AND CYS-168</scope>
    <scope>CATALYTIC ACTIVITY</scope>
    <scope>COFACTOR</scope>
</reference>
<organism>
    <name type="scientific">Catharanthus roseus</name>
    <name type="common">Madagascar periwinkle</name>
    <name type="synonym">Vinca rosea</name>
    <dbReference type="NCBI Taxonomy" id="4058"/>
    <lineage>
        <taxon>Eukaryota</taxon>
        <taxon>Viridiplantae</taxon>
        <taxon>Streptophyta</taxon>
        <taxon>Embryophyta</taxon>
        <taxon>Tracheophyta</taxon>
        <taxon>Spermatophyta</taxon>
        <taxon>Magnoliopsida</taxon>
        <taxon>eudicotyledons</taxon>
        <taxon>Gunneridae</taxon>
        <taxon>Pentapetalae</taxon>
        <taxon>asterids</taxon>
        <taxon>lamiids</taxon>
        <taxon>Gentianales</taxon>
        <taxon>Apocynaceae</taxon>
        <taxon>Rauvolfioideae</taxon>
        <taxon>Vinceae</taxon>
        <taxon>Catharanthinae</taxon>
        <taxon>Catharanthus</taxon>
    </lineage>
</organism>
<comment type="function">
    <text evidence="3 4 6">Component of the seco-iridoid and derivatives monoterpenoid indole alkaloids (MIAs, e.g. catharanthine, tabersonine, vincadifformine, vindoline, vincristine, quinine and strychnine) biosynthesis pathway (PubMed:29147812, PubMed:30256480). During the conversion of strictosidine aglycone to geissoschizine, catalyzes iminium reduction on 4,21-dehydrogeissoschizine to produce 19E-geissoschizine, precursor of catharanthine and tabersonine derivatives (PubMed:29147812, PubMed:30256480, PubMed:36198083). May also trigger the production of reactive intermediate used by the HL1, HL2, HL3 and HL4 to form catharanthine, vincadifformine and tabersonine (PubMed:30256480).</text>
</comment>
<comment type="catalytic activity">
    <reaction evidence="3 4">
        <text>(19E)-geissoschizine + NADP(+) = 4,21-dehydrogeissoschizine + NADPH</text>
        <dbReference type="Rhea" id="RHEA:11376"/>
        <dbReference type="ChEBI" id="CHEBI:17037"/>
        <dbReference type="ChEBI" id="CHEBI:17294"/>
        <dbReference type="ChEBI" id="CHEBI:57783"/>
        <dbReference type="ChEBI" id="CHEBI:58349"/>
        <dbReference type="EC" id="1.3.1.36"/>
    </reaction>
    <physiologicalReaction direction="right-to-left" evidence="3 4">
        <dbReference type="Rhea" id="RHEA:11378"/>
    </physiologicalReaction>
</comment>
<comment type="cofactor">
    <cofactor evidence="6">
        <name>Zn(2+)</name>
        <dbReference type="ChEBI" id="CHEBI:29105"/>
    </cofactor>
    <text evidence="6">Binds 2 Zn(2+) ions per subunit.</text>
</comment>
<comment type="pathway">
    <text evidence="3 4">Alkaloid biosynthesis.</text>
</comment>
<comment type="subunit">
    <text evidence="1">Homodimer.</text>
</comment>
<comment type="tissue specificity">
    <text evidence="2 4">Expressed in leaf epidermis.</text>
</comment>
<comment type="induction">
    <text evidence="5">Induced by methyl jasmonate (MeJA, MJ) and silver nitrate (AgNO(3)).</text>
</comment>
<comment type="disruption phenotype">
    <text evidence="3 4">Accumulation of ajmalicine at the expense of catharanthine and vindoline production (PubMed:29147812, PubMed:30256480). Lower tabersonine-forming activity (PubMed:30256480).</text>
</comment>
<comment type="similarity">
    <text evidence="11">Belongs to the zinc-containing alcohol dehydrogenase family. Class-III subfamily.</text>
</comment>
<comment type="online information" name="ORCAE database">
    <link uri="https://orcae.psb.ugent.be/taxa/catro/regular/v1/"/>
</comment>
<protein>
    <recommendedName>
        <fullName evidence="8 9">Geissoschizine synthase</fullName>
        <shortName evidence="8 9">CrGS</shortName>
        <ecNumber evidence="3 4">1.3.1.36</ecNumber>
    </recommendedName>
    <alternativeName>
        <fullName evidence="7">Alcohol dehydrogenase 14</fullName>
        <shortName evidence="7">CrADH14</shortName>
    </alternativeName>
</protein>
<evidence type="ECO:0000250" key="1">
    <source>
        <dbReference type="UniProtKB" id="P06525"/>
    </source>
</evidence>
<evidence type="ECO:0000269" key="2">
    <source>
    </source>
</evidence>
<evidence type="ECO:0000269" key="3">
    <source>
    </source>
</evidence>
<evidence type="ECO:0000269" key="4">
    <source>
    </source>
</evidence>
<evidence type="ECO:0000269" key="5">
    <source>
    </source>
</evidence>
<evidence type="ECO:0000269" key="6">
    <source>
    </source>
</evidence>
<evidence type="ECO:0000303" key="7">
    <source>
    </source>
</evidence>
<evidence type="ECO:0000303" key="8">
    <source>
    </source>
</evidence>
<evidence type="ECO:0000303" key="9">
    <source>
    </source>
</evidence>
<evidence type="ECO:0000303" key="10">
    <source>
    </source>
</evidence>
<evidence type="ECO:0000305" key="11"/>
<evidence type="ECO:0007744" key="12">
    <source>
        <dbReference type="PDB" id="8A3N"/>
    </source>
</evidence>
<evidence type="ECO:0007829" key="13">
    <source>
        <dbReference type="PDB" id="8A3N"/>
    </source>
</evidence>
<dbReference type="EC" id="1.3.1.36" evidence="3 4"/>
<dbReference type="EMBL" id="KF302079">
    <property type="protein sequence ID" value="AHK60846.1"/>
    <property type="molecule type" value="mRNA"/>
</dbReference>
<dbReference type="EMBL" id="MF770507">
    <property type="protein sequence ID" value="AVM85915.1"/>
    <property type="molecule type" value="mRNA"/>
</dbReference>
<dbReference type="PDB" id="8A3N">
    <property type="method" value="X-ray"/>
    <property type="resolution" value="2.00 A"/>
    <property type="chains" value="A/B=2-364"/>
</dbReference>
<dbReference type="PDBsum" id="8A3N"/>
<dbReference type="SMR" id="W8JWW7"/>
<dbReference type="KEGG" id="ag:AHK60846"/>
<dbReference type="OrthoDB" id="1932847at2759"/>
<dbReference type="BioCyc" id="MetaCyc:MONOMER-12392"/>
<dbReference type="GO" id="GO:0047920">
    <property type="term" value="F:geissoschizine dehydrogenase activity"/>
    <property type="evidence" value="ECO:0000315"/>
    <property type="project" value="UniProtKB"/>
</dbReference>
<dbReference type="GO" id="GO:0016616">
    <property type="term" value="F:oxidoreductase activity, acting on the CH-OH group of donors, NAD or NADP as acceptor"/>
    <property type="evidence" value="ECO:0007669"/>
    <property type="project" value="InterPro"/>
</dbReference>
<dbReference type="GO" id="GO:0008270">
    <property type="term" value="F:zinc ion binding"/>
    <property type="evidence" value="ECO:0007669"/>
    <property type="project" value="InterPro"/>
</dbReference>
<dbReference type="GO" id="GO:0035834">
    <property type="term" value="P:indole alkaloid metabolic process"/>
    <property type="evidence" value="ECO:0000314"/>
    <property type="project" value="UniProtKB"/>
</dbReference>
<dbReference type="GO" id="GO:0009753">
    <property type="term" value="P:response to jasmonic acid"/>
    <property type="evidence" value="ECO:0000270"/>
    <property type="project" value="UniProtKB"/>
</dbReference>
<dbReference type="GO" id="GO:0010272">
    <property type="term" value="P:response to silver ion"/>
    <property type="evidence" value="ECO:0000270"/>
    <property type="project" value="UniProtKB"/>
</dbReference>
<dbReference type="CDD" id="cd05283">
    <property type="entry name" value="CAD1"/>
    <property type="match status" value="1"/>
</dbReference>
<dbReference type="FunFam" id="3.40.50.720:FF:000022">
    <property type="entry name" value="Cinnamyl alcohol dehydrogenase"/>
    <property type="match status" value="1"/>
</dbReference>
<dbReference type="Gene3D" id="3.90.180.10">
    <property type="entry name" value="Medium-chain alcohol dehydrogenases, catalytic domain"/>
    <property type="match status" value="1"/>
</dbReference>
<dbReference type="Gene3D" id="3.40.50.720">
    <property type="entry name" value="NAD(P)-binding Rossmann-like Domain"/>
    <property type="match status" value="1"/>
</dbReference>
<dbReference type="InterPro" id="IPR013149">
    <property type="entry name" value="ADH-like_C"/>
</dbReference>
<dbReference type="InterPro" id="IPR013154">
    <property type="entry name" value="ADH-like_N"/>
</dbReference>
<dbReference type="InterPro" id="IPR002328">
    <property type="entry name" value="ADH_Zn_CS"/>
</dbReference>
<dbReference type="InterPro" id="IPR047109">
    <property type="entry name" value="CAD-like"/>
</dbReference>
<dbReference type="InterPro" id="IPR011032">
    <property type="entry name" value="GroES-like_sf"/>
</dbReference>
<dbReference type="InterPro" id="IPR036291">
    <property type="entry name" value="NAD(P)-bd_dom_sf"/>
</dbReference>
<dbReference type="InterPro" id="IPR020843">
    <property type="entry name" value="PKS_ER"/>
</dbReference>
<dbReference type="PANTHER" id="PTHR42683">
    <property type="entry name" value="ALDEHYDE REDUCTASE"/>
    <property type="match status" value="1"/>
</dbReference>
<dbReference type="Pfam" id="PF08240">
    <property type="entry name" value="ADH_N"/>
    <property type="match status" value="1"/>
</dbReference>
<dbReference type="Pfam" id="PF00107">
    <property type="entry name" value="ADH_zinc_N"/>
    <property type="match status" value="1"/>
</dbReference>
<dbReference type="SMART" id="SM00829">
    <property type="entry name" value="PKS_ER"/>
    <property type="match status" value="1"/>
</dbReference>
<dbReference type="SUPFAM" id="SSF50129">
    <property type="entry name" value="GroES-like"/>
    <property type="match status" value="1"/>
</dbReference>
<dbReference type="SUPFAM" id="SSF51735">
    <property type="entry name" value="NAD(P)-binding Rossmann-fold domains"/>
    <property type="match status" value="1"/>
</dbReference>
<dbReference type="PROSITE" id="PS00059">
    <property type="entry name" value="ADH_ZINC"/>
    <property type="match status" value="1"/>
</dbReference>
<gene>
    <name evidence="8 9" type="primary">GS</name>
    <name evidence="7" type="synonym">ADH14</name>
    <name evidence="10" type="synonym">DPAS</name>
    <name evidence="7" type="ORF">Caros006689</name>
</gene>